<accession>P33176</accession>
<accession>A0AVB2</accession>
<accession>Q5VZ85</accession>
<comment type="function">
    <text evidence="1 2 9 13 17 18">Microtubule-dependent motor required for normal distribution of mitochondria and lysosomes. Can induce formation of neurite-like membrane protrusions in non-neuronal cells in a ZFYVE27-dependent manner (By similarity). Regulates centrosome and nuclear positioning during mitotic entry. During the G2 phase of the cell cycle in a BICD2-dependent manner, antagonizes dynein function and drives the separation of nuclei and centrosomes (PubMed:20386726). Required for anterograde axonal transportation of MAPK8IP3/JIP3 which is essential for MAPK8IP3/JIP3 function in axon elongation (By similarity). Through binding with PLEKHM2 and ARL8B, directs lysosome movement toward microtubule plus ends (Probable). Involved in NK cell-mediated cytotoxicity. Drives the polarization of cytolytic granules and microtubule-organizing centers (MTOCs) toward the immune synapse between effector NK lymphocytes and target cells (PubMed:24088571).</text>
</comment>
<comment type="subunit">
    <text evidence="2 5 6 7 8 10 12 14 15">Oligomer composed of two heavy chains and two light chains. Interacts with GRIP1 and PPP1R42 (By similarity). Interacts with SYBU (PubMed:15459722). Interacts with JAKMIP1 (PubMed:17532644). Interacts with PLEKHM2 (PubMed:15905402). Interacts with ECPAS (PubMed:20682791). Interacts with ZFYVE27 (By similarity). Found in a complex with OGT, RHOT1, RHOT2 and TRAK1 (PubMed:24995978). Interacts with APP (via cytoplasmic domain) (PubMed:23011729).</text>
</comment>
<comment type="interaction">
    <interactant intactId="EBI-355878">
        <id>P33176</id>
    </interactant>
    <interactant intactId="EBI-2949658">
        <id>O95429</id>
        <label>BAG4</label>
    </interactant>
    <organismsDiffer>false</organismsDiffer>
    <experiments>3</experiments>
</comment>
<comment type="interaction">
    <interactant intactId="EBI-355878">
        <id>P33176</id>
    </interactant>
    <interactant intactId="EBI-1181367">
        <id>Q01850</id>
        <label>CDR2</label>
    </interactant>
    <organismsDiffer>false</organismsDiffer>
    <experiments>3</experiments>
</comment>
<comment type="interaction">
    <interactant intactId="EBI-355878">
        <id>P33176</id>
    </interactant>
    <interactant intactId="EBI-701903">
        <id>Q14192</id>
        <label>FHL2</label>
    </interactant>
    <organismsDiffer>false</organismsDiffer>
    <experiments>3</experiments>
</comment>
<comment type="interaction">
    <interactant intactId="EBI-355878">
        <id>P33176</id>
    </interactant>
    <interactant intactId="EBI-2869338">
        <id>Q9BQS8</id>
        <label>FYCO1</label>
    </interactant>
    <organismsDiffer>false</organismsDiffer>
    <experiments>3</experiments>
</comment>
<comment type="interaction">
    <interactant intactId="EBI-355878">
        <id>P33176</id>
    </interactant>
    <interactant intactId="EBI-746252">
        <id>Q96CN9</id>
        <label>GCC1</label>
    </interactant>
    <organismsDiffer>false</organismsDiffer>
    <experiments>3</experiments>
</comment>
<comment type="interaction">
    <interactant intactId="EBI-355878">
        <id>P33176</id>
    </interactant>
    <interactant intactId="EBI-7116203">
        <id>O75031</id>
        <label>HSF2BP</label>
    </interactant>
    <organismsDiffer>false</organismsDiffer>
    <experiments>3</experiments>
</comment>
<comment type="interaction">
    <interactant intactId="EBI-355878">
        <id>P33176</id>
    </interactant>
    <interactant intactId="EBI-355878">
        <id>P33176</id>
        <label>KIF5B</label>
    </interactant>
    <organismsDiffer>false</organismsDiffer>
    <experiments>5</experiments>
</comment>
<comment type="interaction">
    <interactant intactId="EBI-355878">
        <id>P33176</id>
    </interactant>
    <interactant intactId="EBI-20141748">
        <id>P52954</id>
        <label>LBX1</label>
    </interactant>
    <organismsDiffer>false</organismsDiffer>
    <experiments>3</experiments>
</comment>
<comment type="interaction">
    <interactant intactId="EBI-355878">
        <id>P33176</id>
    </interactant>
    <interactant intactId="EBI-16439278">
        <id>Q6FHY5</id>
        <label>MEOX2</label>
    </interactant>
    <organismsDiffer>false</organismsDiffer>
    <experiments>3</experiments>
</comment>
<comment type="interaction">
    <interactant intactId="EBI-355878">
        <id>P33176</id>
    </interactant>
    <interactant intactId="EBI-347928">
        <id>P62487</id>
        <label>POLR2G</label>
    </interactant>
    <organismsDiffer>false</organismsDiffer>
    <experiments>3</experiments>
</comment>
<comment type="interaction">
    <interactant intactId="EBI-355878">
        <id>P33176</id>
    </interactant>
    <interactant intactId="EBI-12029004">
        <id>P78424</id>
        <label>POU6F2</label>
    </interactant>
    <organismsDiffer>false</organismsDiffer>
    <experiments>3</experiments>
</comment>
<comment type="interaction">
    <interactant intactId="EBI-355878">
        <id>P33176</id>
    </interactant>
    <interactant intactId="EBI-2805516">
        <id>P31321</id>
        <label>PRKAR1B</label>
    </interactant>
    <organismsDiffer>false</organismsDiffer>
    <experiments>3</experiments>
</comment>
<comment type="interaction">
    <interactant intactId="EBI-355878">
        <id>P33176</id>
    </interactant>
    <interactant intactId="EBI-2930670">
        <id>P31323</id>
        <label>PRKAR2B</label>
    </interactant>
    <organismsDiffer>false</organismsDiffer>
    <experiments>3</experiments>
</comment>
<comment type="interaction">
    <interactant intactId="EBI-355878">
        <id>P33176</id>
    </interactant>
    <interactant intactId="EBI-347088">
        <id>P63104</id>
        <label>YWHAZ</label>
    </interactant>
    <organismsDiffer>false</organismsDiffer>
    <experiments>5</experiments>
</comment>
<comment type="interaction">
    <interactant intactId="EBI-355878">
        <id>P33176</id>
    </interactant>
    <interactant intactId="EBI-742740">
        <id>Q96BR9</id>
        <label>ZBTB8A</label>
    </interactant>
    <organismsDiffer>false</organismsDiffer>
    <experiments>3</experiments>
</comment>
<comment type="interaction">
    <interactant intactId="EBI-355878">
        <id>P33176</id>
    </interactant>
    <interactant intactId="EBI-7133540">
        <id>P68619</id>
        <label>OPG164</label>
    </interactant>
    <organismsDiffer>true</organismsDiffer>
    <experiments>3</experiments>
</comment>
<comment type="interaction">
    <interactant intactId="EBI-355878">
        <id>P33176</id>
    </interactant>
    <interactant intactId="EBI-15752280">
        <id>Q8CII8</id>
        <label>Syne4</label>
    </interactant>
    <organismsDiffer>true</organismsDiffer>
    <experiments>2</experiments>
</comment>
<comment type="subcellular location">
    <subcellularLocation>
        <location evidence="1">Cytoplasm</location>
        <location evidence="1">Cytoskeleton</location>
    </subcellularLocation>
    <subcellularLocation>
        <location evidence="13">Cytolytic granule membrane</location>
    </subcellularLocation>
    <subcellularLocation>
        <location evidence="11 13">Lysosome membrane</location>
        <topology evidence="17 18">Peripheral membrane protein</topology>
        <orientation evidence="17 18">Cytoplasmic side</orientation>
    </subcellularLocation>
    <text evidence="1">Uniformly distributed between soma and neurites in hippocampal neurons.</text>
</comment>
<comment type="domain">
    <text>Composed of three structural domains: a large globular N-terminal domain which is responsible for the motor activity of kinesin (it hydrolyzes ATP and binds microtubule), a central alpha-helical coiled coil domain that mediates the heavy chain dimerization; and a small globular C-terminal domain which interacts with other proteins (such as the kinesin light chains), vesicles and membranous organelles.</text>
</comment>
<comment type="similarity">
    <text evidence="3">Belongs to the TRAFAC class myosin-kinesin ATPase superfamily. Kinesin family. Kinesin subfamily.</text>
</comment>
<protein>
    <recommendedName>
        <fullName evidence="16">Kinesin-1 heavy chain</fullName>
    </recommendedName>
    <alternativeName>
        <fullName>Conventional kinesin heavy chain</fullName>
    </alternativeName>
    <alternativeName>
        <fullName>Ubiquitous kinesin heavy chain</fullName>
        <shortName>UKHC</shortName>
    </alternativeName>
</protein>
<dbReference type="EMBL" id="X65873">
    <property type="protein sequence ID" value="CAA46703.1"/>
    <property type="molecule type" value="mRNA"/>
</dbReference>
<dbReference type="EMBL" id="AL161932">
    <property type="status" value="NOT_ANNOTATED_CDS"/>
    <property type="molecule type" value="Genomic_DNA"/>
</dbReference>
<dbReference type="EMBL" id="BC126279">
    <property type="protein sequence ID" value="AAI26280.1"/>
    <property type="molecule type" value="mRNA"/>
</dbReference>
<dbReference type="EMBL" id="BC126281">
    <property type="protein sequence ID" value="AAI26282.1"/>
    <property type="molecule type" value="mRNA"/>
</dbReference>
<dbReference type="CCDS" id="CCDS7171.1"/>
<dbReference type="PIR" id="A41919">
    <property type="entry name" value="A41919"/>
</dbReference>
<dbReference type="RefSeq" id="NP_004512.1">
    <property type="nucleotide sequence ID" value="NM_004521.3"/>
</dbReference>
<dbReference type="RefSeq" id="XP_047281158.1">
    <property type="nucleotide sequence ID" value="XM_047425202.1"/>
</dbReference>
<dbReference type="RefSeq" id="XP_054221820.1">
    <property type="nucleotide sequence ID" value="XM_054365845.1"/>
</dbReference>
<dbReference type="PDB" id="1BG2">
    <property type="method" value="X-ray"/>
    <property type="resolution" value="1.80 A"/>
    <property type="chains" value="A=1-325"/>
</dbReference>
<dbReference type="PDB" id="1MKJ">
    <property type="method" value="X-ray"/>
    <property type="resolution" value="2.70 A"/>
    <property type="chains" value="A=1-349"/>
</dbReference>
<dbReference type="PDB" id="2P4N">
    <property type="method" value="EM"/>
    <property type="resolution" value="9.00 A"/>
    <property type="chains" value="K=1-325"/>
</dbReference>
<dbReference type="PDB" id="3J8X">
    <property type="method" value="EM"/>
    <property type="resolution" value="5.00 A"/>
    <property type="chains" value="K=1-349"/>
</dbReference>
<dbReference type="PDB" id="3J8Y">
    <property type="method" value="EM"/>
    <property type="resolution" value="5.00 A"/>
    <property type="chains" value="K=1-349"/>
</dbReference>
<dbReference type="PDB" id="4HNA">
    <property type="method" value="X-ray"/>
    <property type="resolution" value="3.19 A"/>
    <property type="chains" value="K=1-349"/>
</dbReference>
<dbReference type="PDB" id="4LNU">
    <property type="method" value="X-ray"/>
    <property type="resolution" value="2.19 A"/>
    <property type="chains" value="K=1-325"/>
</dbReference>
<dbReference type="PDB" id="5LT0">
    <property type="method" value="X-ray"/>
    <property type="resolution" value="2.00 A"/>
    <property type="chains" value="A=1-325"/>
</dbReference>
<dbReference type="PDB" id="5LT1">
    <property type="method" value="X-ray"/>
    <property type="resolution" value="1.95 A"/>
    <property type="chains" value="A/B=1-325"/>
</dbReference>
<dbReference type="PDB" id="5LT2">
    <property type="method" value="X-ray"/>
    <property type="resolution" value="2.60 A"/>
    <property type="chains" value="A/B/C/D/E/K=1-325"/>
</dbReference>
<dbReference type="PDB" id="5LT3">
    <property type="method" value="X-ray"/>
    <property type="resolution" value="2.59 A"/>
    <property type="chains" value="A/B/C/D/E/K=1-325"/>
</dbReference>
<dbReference type="PDB" id="5LT4">
    <property type="method" value="X-ray"/>
    <property type="resolution" value="2.88 A"/>
    <property type="chains" value="A/B/C/D/E/K=1-325"/>
</dbReference>
<dbReference type="PDB" id="6OJQ">
    <property type="method" value="EM"/>
    <property type="resolution" value="3.67 A"/>
    <property type="chains" value="K=8-324"/>
</dbReference>
<dbReference type="PDB" id="7RIK">
    <property type="method" value="NMR"/>
    <property type="chains" value="A=1-349"/>
</dbReference>
<dbReference type="PDB" id="8IXA">
    <property type="method" value="EM"/>
    <property type="resolution" value="4.20 A"/>
    <property type="chains" value="S/T/U/V/W/X/Y/Z/a=1-349"/>
</dbReference>
<dbReference type="PDB" id="8IXB">
    <property type="method" value="EM"/>
    <property type="resolution" value="4.20 A"/>
    <property type="chains" value="g/k/l/m=1-349"/>
</dbReference>
<dbReference type="PDB" id="8IXD">
    <property type="method" value="EM"/>
    <property type="resolution" value="4.40 A"/>
    <property type="chains" value="S/T/U/V/W/X/Y/Z/a=1-349"/>
</dbReference>
<dbReference type="PDB" id="8IXE">
    <property type="method" value="EM"/>
    <property type="resolution" value="4.40 A"/>
    <property type="chains" value="h/l/p/q=1-349"/>
</dbReference>
<dbReference type="PDB" id="8IXF">
    <property type="method" value="EM"/>
    <property type="resolution" value="4.40 A"/>
    <property type="chains" value="S/T/U/V/W/X/Y/Z/a=1-349"/>
</dbReference>
<dbReference type="PDB" id="8IXG">
    <property type="method" value="EM"/>
    <property type="resolution" value="4.40 A"/>
    <property type="chains" value="h/l/p/q=1-349"/>
</dbReference>
<dbReference type="PDB" id="8RHB">
    <property type="method" value="EM"/>
    <property type="resolution" value="3.00 A"/>
    <property type="chains" value="K/T/t=1-963"/>
</dbReference>
<dbReference type="PDB" id="8RHH">
    <property type="method" value="EM"/>
    <property type="resolution" value="3.00 A"/>
    <property type="chains" value="K/L/T/t=1-963"/>
</dbReference>
<dbReference type="PDB" id="8RIK">
    <property type="method" value="EM"/>
    <property type="resolution" value="3.60 A"/>
    <property type="chains" value="K/T/t=1-963"/>
</dbReference>
<dbReference type="PDB" id="8RIZ">
    <property type="method" value="EM"/>
    <property type="resolution" value="3.60 A"/>
    <property type="chains" value="K/L/T=1-963"/>
</dbReference>
<dbReference type="PDB" id="9GNQ">
    <property type="method" value="EM"/>
    <property type="resolution" value="2.90 A"/>
    <property type="chains" value="K=1-357"/>
</dbReference>
<dbReference type="PDBsum" id="1BG2"/>
<dbReference type="PDBsum" id="1MKJ"/>
<dbReference type="PDBsum" id="2P4N"/>
<dbReference type="PDBsum" id="3J8X"/>
<dbReference type="PDBsum" id="3J8Y"/>
<dbReference type="PDBsum" id="4HNA"/>
<dbReference type="PDBsum" id="4LNU"/>
<dbReference type="PDBsum" id="5LT0"/>
<dbReference type="PDBsum" id="5LT1"/>
<dbReference type="PDBsum" id="5LT2"/>
<dbReference type="PDBsum" id="5LT3"/>
<dbReference type="PDBsum" id="5LT4"/>
<dbReference type="PDBsum" id="6OJQ"/>
<dbReference type="PDBsum" id="7RIK"/>
<dbReference type="PDBsum" id="8IXA"/>
<dbReference type="PDBsum" id="8IXB"/>
<dbReference type="PDBsum" id="8IXD"/>
<dbReference type="PDBsum" id="8IXE"/>
<dbReference type="PDBsum" id="8IXF"/>
<dbReference type="PDBsum" id="8IXG"/>
<dbReference type="PDBsum" id="8RHB"/>
<dbReference type="PDBsum" id="8RHH"/>
<dbReference type="PDBsum" id="8RIK"/>
<dbReference type="PDBsum" id="8RIZ"/>
<dbReference type="PDBsum" id="9GNQ"/>
<dbReference type="EMDB" id="EMD-1340"/>
<dbReference type="EMDB" id="EMD-19174"/>
<dbReference type="EMDB" id="EMD-19176"/>
<dbReference type="EMDB" id="EMD-19188"/>
<dbReference type="EMDB" id="EMD-19192"/>
<dbReference type="EMDB" id="EMD-20092"/>
<dbReference type="EMDB" id="EMD-35790"/>
<dbReference type="EMDB" id="EMD-35791"/>
<dbReference type="EMDB" id="EMD-35792"/>
<dbReference type="EMDB" id="EMD-51477"/>
<dbReference type="EMDB" id="EMD-6188"/>
<dbReference type="EMDB" id="EMD-8546"/>
<dbReference type="EMDB" id="EMD-8547"/>
<dbReference type="SMR" id="P33176"/>
<dbReference type="BioGRID" id="110000">
    <property type="interactions" value="345"/>
</dbReference>
<dbReference type="CORUM" id="P33176"/>
<dbReference type="DIP" id="DIP-29244N"/>
<dbReference type="FunCoup" id="P33176">
    <property type="interactions" value="2650"/>
</dbReference>
<dbReference type="IntAct" id="P33176">
    <property type="interactions" value="140"/>
</dbReference>
<dbReference type="MINT" id="P33176"/>
<dbReference type="STRING" id="9606.ENSP00000307078"/>
<dbReference type="BindingDB" id="P33176"/>
<dbReference type="ChEMBL" id="CHEMBL5864"/>
<dbReference type="TCDB" id="1.P.1.1.1">
    <property type="family name" value="the polyoma virus sv40 er penetration channel (vpec) family"/>
</dbReference>
<dbReference type="CarbonylDB" id="P33176"/>
<dbReference type="GlyConnect" id="2938">
    <property type="glycosylation" value="1 N-Linked glycan (1 site)"/>
</dbReference>
<dbReference type="GlyCosmos" id="P33176">
    <property type="glycosylation" value="2 sites, 3 glycans"/>
</dbReference>
<dbReference type="GlyGen" id="P33176">
    <property type="glycosylation" value="4 sites, 3 N-linked glycans (2 sites), 1 O-linked glycan (2 sites)"/>
</dbReference>
<dbReference type="iPTMnet" id="P33176"/>
<dbReference type="MetOSite" id="P33176"/>
<dbReference type="PhosphoSitePlus" id="P33176"/>
<dbReference type="SwissPalm" id="P33176"/>
<dbReference type="BioMuta" id="KIF5B"/>
<dbReference type="DMDM" id="417216"/>
<dbReference type="CPTAC" id="CPTAC-397"/>
<dbReference type="CPTAC" id="CPTAC-398"/>
<dbReference type="jPOST" id="P33176"/>
<dbReference type="MassIVE" id="P33176"/>
<dbReference type="PaxDb" id="9606-ENSP00000307078"/>
<dbReference type="PeptideAtlas" id="P33176"/>
<dbReference type="ProteomicsDB" id="54901"/>
<dbReference type="Pumba" id="P33176"/>
<dbReference type="Antibodypedia" id="4077">
    <property type="antibodies" value="467 antibodies from 41 providers"/>
</dbReference>
<dbReference type="DNASU" id="3799"/>
<dbReference type="Ensembl" id="ENST00000302418.5">
    <property type="protein sequence ID" value="ENSP00000307078.4"/>
    <property type="gene ID" value="ENSG00000170759.11"/>
</dbReference>
<dbReference type="GeneID" id="3799"/>
<dbReference type="KEGG" id="hsa:3799"/>
<dbReference type="MANE-Select" id="ENST00000302418.5">
    <property type="protein sequence ID" value="ENSP00000307078.4"/>
    <property type="RefSeq nucleotide sequence ID" value="NM_004521.3"/>
    <property type="RefSeq protein sequence ID" value="NP_004512.1"/>
</dbReference>
<dbReference type="AGR" id="HGNC:6324"/>
<dbReference type="CTD" id="3799"/>
<dbReference type="DisGeNET" id="3799"/>
<dbReference type="GeneCards" id="KIF5B"/>
<dbReference type="HGNC" id="HGNC:6324">
    <property type="gene designation" value="KIF5B"/>
</dbReference>
<dbReference type="HPA" id="ENSG00000170759">
    <property type="expression patterns" value="Low tissue specificity"/>
</dbReference>
<dbReference type="MalaCards" id="KIF5B"/>
<dbReference type="MIM" id="602809">
    <property type="type" value="gene"/>
</dbReference>
<dbReference type="neXtProt" id="NX_P33176"/>
<dbReference type="OpenTargets" id="ENSG00000170759"/>
<dbReference type="PharmGKB" id="PA30108"/>
<dbReference type="VEuPathDB" id="HostDB:ENSG00000170759"/>
<dbReference type="eggNOG" id="KOG0240">
    <property type="taxonomic scope" value="Eukaryota"/>
</dbReference>
<dbReference type="GeneTree" id="ENSGT00940000154801"/>
<dbReference type="HOGENOM" id="CLU_001485_11_1_1"/>
<dbReference type="InParanoid" id="P33176"/>
<dbReference type="OMA" id="FPMGTKQ"/>
<dbReference type="OrthoDB" id="3176171at2759"/>
<dbReference type="PAN-GO" id="P33176">
    <property type="GO annotations" value="8 GO annotations based on evolutionary models"/>
</dbReference>
<dbReference type="PhylomeDB" id="P33176"/>
<dbReference type="TreeFam" id="TF105225"/>
<dbReference type="BRENDA" id="5.6.1.3">
    <property type="organism ID" value="2681"/>
</dbReference>
<dbReference type="PathwayCommons" id="P33176"/>
<dbReference type="Reactome" id="R-HSA-2132295">
    <property type="pathway name" value="MHC class II antigen presentation"/>
</dbReference>
<dbReference type="Reactome" id="R-HSA-264876">
    <property type="pathway name" value="Insulin processing"/>
</dbReference>
<dbReference type="Reactome" id="R-HSA-5625970">
    <property type="pathway name" value="RHO GTPases activate KTN1"/>
</dbReference>
<dbReference type="Reactome" id="R-HSA-6811434">
    <property type="pathway name" value="COPI-dependent Golgi-to-ER retrograde traffic"/>
</dbReference>
<dbReference type="Reactome" id="R-HSA-9725370">
    <property type="pathway name" value="Signaling by ALK fusions and activated point mutants"/>
</dbReference>
<dbReference type="Reactome" id="R-HSA-983189">
    <property type="pathway name" value="Kinesins"/>
</dbReference>
<dbReference type="SignaLink" id="P33176"/>
<dbReference type="SIGNOR" id="P33176"/>
<dbReference type="BioGRID-ORCS" id="3799">
    <property type="hits" value="13 hits in 1155 CRISPR screens"/>
</dbReference>
<dbReference type="CD-CODE" id="FB4E32DD">
    <property type="entry name" value="Presynaptic clusters and postsynaptic densities"/>
</dbReference>
<dbReference type="ChiTaRS" id="KIF5B">
    <property type="organism name" value="human"/>
</dbReference>
<dbReference type="EvolutionaryTrace" id="P33176"/>
<dbReference type="GeneWiki" id="KIF5B"/>
<dbReference type="GenomeRNAi" id="3799"/>
<dbReference type="Pharos" id="P33176">
    <property type="development level" value="Tbio"/>
</dbReference>
<dbReference type="PRO" id="PR:P33176"/>
<dbReference type="Proteomes" id="UP000005640">
    <property type="component" value="Chromosome 10"/>
</dbReference>
<dbReference type="RNAct" id="P33176">
    <property type="molecule type" value="protein"/>
</dbReference>
<dbReference type="Bgee" id="ENSG00000170759">
    <property type="expression patterns" value="Expressed in cauda epididymis and 213 other cell types or tissues"/>
</dbReference>
<dbReference type="ExpressionAtlas" id="P33176">
    <property type="expression patterns" value="baseline and differential"/>
</dbReference>
<dbReference type="GO" id="GO:1904115">
    <property type="term" value="C:axon cytoplasm"/>
    <property type="evidence" value="ECO:0007669"/>
    <property type="project" value="GOC"/>
</dbReference>
<dbReference type="GO" id="GO:0034451">
    <property type="term" value="C:centriolar satellite"/>
    <property type="evidence" value="ECO:0000314"/>
    <property type="project" value="HPA"/>
</dbReference>
<dbReference type="GO" id="GO:0035253">
    <property type="term" value="C:ciliary rootlet"/>
    <property type="evidence" value="ECO:0007669"/>
    <property type="project" value="Ensembl"/>
</dbReference>
<dbReference type="GO" id="GO:0101004">
    <property type="term" value="C:cytolytic granule membrane"/>
    <property type="evidence" value="ECO:0007669"/>
    <property type="project" value="UniProtKB-SubCell"/>
</dbReference>
<dbReference type="GO" id="GO:0005737">
    <property type="term" value="C:cytoplasm"/>
    <property type="evidence" value="ECO:0000318"/>
    <property type="project" value="GO_Central"/>
</dbReference>
<dbReference type="GO" id="GO:0005829">
    <property type="term" value="C:cytosol"/>
    <property type="evidence" value="ECO:0000314"/>
    <property type="project" value="HPA"/>
</dbReference>
<dbReference type="GO" id="GO:0032839">
    <property type="term" value="C:dendrite cytoplasm"/>
    <property type="evidence" value="ECO:0007669"/>
    <property type="project" value="GOC"/>
</dbReference>
<dbReference type="GO" id="GO:0005871">
    <property type="term" value="C:kinesin complex"/>
    <property type="evidence" value="ECO:0000318"/>
    <property type="project" value="GO_Central"/>
</dbReference>
<dbReference type="GO" id="GO:0016020">
    <property type="term" value="C:membrane"/>
    <property type="evidence" value="ECO:0007005"/>
    <property type="project" value="UniProtKB"/>
</dbReference>
<dbReference type="GO" id="GO:0005874">
    <property type="term" value="C:microtubule"/>
    <property type="evidence" value="ECO:0000318"/>
    <property type="project" value="GO_Central"/>
</dbReference>
<dbReference type="GO" id="GO:0005739">
    <property type="term" value="C:mitochondrion"/>
    <property type="evidence" value="ECO:0007669"/>
    <property type="project" value="Ensembl"/>
</dbReference>
<dbReference type="GO" id="GO:0031965">
    <property type="term" value="C:nuclear membrane"/>
    <property type="evidence" value="ECO:0000314"/>
    <property type="project" value="HPA"/>
</dbReference>
<dbReference type="GO" id="GO:0048471">
    <property type="term" value="C:perinuclear region of cytoplasm"/>
    <property type="evidence" value="ECO:0000250"/>
    <property type="project" value="HGNC-UCL"/>
</dbReference>
<dbReference type="GO" id="GO:0045335">
    <property type="term" value="C:phagocytic vesicle"/>
    <property type="evidence" value="ECO:0007669"/>
    <property type="project" value="Ensembl"/>
</dbReference>
<dbReference type="GO" id="GO:0099524">
    <property type="term" value="C:postsynaptic cytosol"/>
    <property type="evidence" value="ECO:0007669"/>
    <property type="project" value="Ensembl"/>
</dbReference>
<dbReference type="GO" id="GO:0031982">
    <property type="term" value="C:vesicle"/>
    <property type="evidence" value="ECO:0000314"/>
    <property type="project" value="UniProtKB"/>
</dbReference>
<dbReference type="GO" id="GO:0005524">
    <property type="term" value="F:ATP binding"/>
    <property type="evidence" value="ECO:0007669"/>
    <property type="project" value="UniProtKB-KW"/>
</dbReference>
<dbReference type="GO" id="GO:0016887">
    <property type="term" value="F:ATP hydrolysis activity"/>
    <property type="evidence" value="ECO:0000318"/>
    <property type="project" value="GO_Central"/>
</dbReference>
<dbReference type="GO" id="GO:0045296">
    <property type="term" value="F:cadherin binding"/>
    <property type="evidence" value="ECO:0007005"/>
    <property type="project" value="BHF-UCL"/>
</dbReference>
<dbReference type="GO" id="GO:0042802">
    <property type="term" value="F:identical protein binding"/>
    <property type="evidence" value="ECO:0000353"/>
    <property type="project" value="IntAct"/>
</dbReference>
<dbReference type="GO" id="GO:0008017">
    <property type="term" value="F:microtubule binding"/>
    <property type="evidence" value="ECO:0000314"/>
    <property type="project" value="ARUK-UCL"/>
</dbReference>
<dbReference type="GO" id="GO:0003777">
    <property type="term" value="F:microtubule motor activity"/>
    <property type="evidence" value="ECO:0000314"/>
    <property type="project" value="ARUK-UCL"/>
</dbReference>
<dbReference type="GO" id="GO:0008574">
    <property type="term" value="F:plus-end-directed microtubule motor activity"/>
    <property type="evidence" value="ECO:0000318"/>
    <property type="project" value="GO_Central"/>
</dbReference>
<dbReference type="GO" id="GO:0044877">
    <property type="term" value="F:protein-containing complex binding"/>
    <property type="evidence" value="ECO:0007669"/>
    <property type="project" value="Ensembl"/>
</dbReference>
<dbReference type="GO" id="GO:0099641">
    <property type="term" value="P:anterograde axonal protein transport"/>
    <property type="evidence" value="ECO:0000250"/>
    <property type="project" value="UniProtKB"/>
</dbReference>
<dbReference type="GO" id="GO:0098971">
    <property type="term" value="P:anterograde dendritic transport of neurotransmitter receptor complex"/>
    <property type="evidence" value="ECO:0000318"/>
    <property type="project" value="GO_Central"/>
</dbReference>
<dbReference type="GO" id="GO:1990048">
    <property type="term" value="P:anterograde neuronal dense core vesicle transport"/>
    <property type="evidence" value="ECO:0000250"/>
    <property type="project" value="ARUK-UCL"/>
</dbReference>
<dbReference type="GO" id="GO:0007411">
    <property type="term" value="P:axon guidance"/>
    <property type="evidence" value="ECO:0000318"/>
    <property type="project" value="GO_Central"/>
</dbReference>
<dbReference type="GO" id="GO:0071346">
    <property type="term" value="P:cellular response to type II interferon"/>
    <property type="evidence" value="ECO:0007669"/>
    <property type="project" value="Ensembl"/>
</dbReference>
<dbReference type="GO" id="GO:0051642">
    <property type="term" value="P:centrosome localization"/>
    <property type="evidence" value="ECO:0000315"/>
    <property type="project" value="UniProtKB"/>
</dbReference>
<dbReference type="GO" id="GO:0007028">
    <property type="term" value="P:cytoplasm organization"/>
    <property type="evidence" value="ECO:0007669"/>
    <property type="project" value="Ensembl"/>
</dbReference>
<dbReference type="GO" id="GO:0032418">
    <property type="term" value="P:lysosome localization"/>
    <property type="evidence" value="ECO:0000315"/>
    <property type="project" value="UniProtKB"/>
</dbReference>
<dbReference type="GO" id="GO:0007018">
    <property type="term" value="P:microtubule-based movement"/>
    <property type="evidence" value="ECO:0000304"/>
    <property type="project" value="ProtInc"/>
</dbReference>
<dbReference type="GO" id="GO:0047497">
    <property type="term" value="P:mitochondrion transport along microtubule"/>
    <property type="evidence" value="ECO:0007669"/>
    <property type="project" value="Ensembl"/>
</dbReference>
<dbReference type="GO" id="GO:0160040">
    <property type="term" value="P:mitocytosis"/>
    <property type="evidence" value="ECO:0007669"/>
    <property type="project" value="Ensembl"/>
</dbReference>
<dbReference type="GO" id="GO:0042267">
    <property type="term" value="P:natural killer cell mediated cytotoxicity"/>
    <property type="evidence" value="ECO:0000315"/>
    <property type="project" value="UniProtKB"/>
</dbReference>
<dbReference type="GO" id="GO:0072383">
    <property type="term" value="P:plus-end-directed vesicle transport along microtubule"/>
    <property type="evidence" value="ECO:0007669"/>
    <property type="project" value="Ensembl"/>
</dbReference>
<dbReference type="GO" id="GO:0043268">
    <property type="term" value="P:positive regulation of potassium ion transport"/>
    <property type="evidence" value="ECO:0000314"/>
    <property type="project" value="BHF-UCL"/>
</dbReference>
<dbReference type="GO" id="GO:1903078">
    <property type="term" value="P:positive regulation of protein localization to plasma membrane"/>
    <property type="evidence" value="ECO:0000314"/>
    <property type="project" value="BHF-UCL"/>
</dbReference>
<dbReference type="GO" id="GO:0032230">
    <property type="term" value="P:positive regulation of synaptic transmission, GABAergic"/>
    <property type="evidence" value="ECO:0007669"/>
    <property type="project" value="Ensembl"/>
</dbReference>
<dbReference type="GO" id="GO:0042391">
    <property type="term" value="P:regulation of membrane potential"/>
    <property type="evidence" value="ECO:0000314"/>
    <property type="project" value="BHF-UCL"/>
</dbReference>
<dbReference type="GO" id="GO:0098987">
    <property type="term" value="P:regulation of modification of synapse structure, modulating synaptic transmission"/>
    <property type="evidence" value="ECO:0007669"/>
    <property type="project" value="Ensembl"/>
</dbReference>
<dbReference type="GO" id="GO:1990049">
    <property type="term" value="P:retrograde neuronal dense core vesicle transport"/>
    <property type="evidence" value="ECO:0000250"/>
    <property type="project" value="ARUK-UCL"/>
</dbReference>
<dbReference type="GO" id="GO:0035617">
    <property type="term" value="P:stress granule disassembly"/>
    <property type="evidence" value="ECO:0000250"/>
    <property type="project" value="BHF-UCL"/>
</dbReference>
<dbReference type="GO" id="GO:0048489">
    <property type="term" value="P:synaptic vesicle transport"/>
    <property type="evidence" value="ECO:0000318"/>
    <property type="project" value="GO_Central"/>
</dbReference>
<dbReference type="GO" id="GO:0047496">
    <property type="term" value="P:vesicle transport along microtubule"/>
    <property type="evidence" value="ECO:0000314"/>
    <property type="project" value="ARUK-UCL"/>
</dbReference>
<dbReference type="CDD" id="cd23649">
    <property type="entry name" value="Khc_CBD_cc"/>
    <property type="match status" value="1"/>
</dbReference>
<dbReference type="CDD" id="cd01369">
    <property type="entry name" value="KISc_KHC_KIF5"/>
    <property type="match status" value="1"/>
</dbReference>
<dbReference type="FunFam" id="3.40.850.10:FF:000009">
    <property type="entry name" value="Kinesin-like protein"/>
    <property type="match status" value="1"/>
</dbReference>
<dbReference type="Gene3D" id="6.10.250.1590">
    <property type="match status" value="1"/>
</dbReference>
<dbReference type="Gene3D" id="3.40.850.10">
    <property type="entry name" value="Kinesin motor domain"/>
    <property type="match status" value="1"/>
</dbReference>
<dbReference type="InterPro" id="IPR027640">
    <property type="entry name" value="Kinesin-like_fam"/>
</dbReference>
<dbReference type="InterPro" id="IPR019821">
    <property type="entry name" value="Kinesin_motor_CS"/>
</dbReference>
<dbReference type="InterPro" id="IPR001752">
    <property type="entry name" value="Kinesin_motor_dom"/>
</dbReference>
<dbReference type="InterPro" id="IPR036961">
    <property type="entry name" value="Kinesin_motor_dom_sf"/>
</dbReference>
<dbReference type="InterPro" id="IPR027417">
    <property type="entry name" value="P-loop_NTPase"/>
</dbReference>
<dbReference type="PANTHER" id="PTHR47968">
    <property type="entry name" value="CENTROMERE PROTEIN E"/>
    <property type="match status" value="1"/>
</dbReference>
<dbReference type="PANTHER" id="PTHR47968:SF68">
    <property type="entry name" value="KINESIN-LIKE PROTEIN"/>
    <property type="match status" value="1"/>
</dbReference>
<dbReference type="Pfam" id="PF00225">
    <property type="entry name" value="Kinesin"/>
    <property type="match status" value="1"/>
</dbReference>
<dbReference type="PRINTS" id="PR00380">
    <property type="entry name" value="KINESINHEAVY"/>
</dbReference>
<dbReference type="SMART" id="SM00129">
    <property type="entry name" value="KISc"/>
    <property type="match status" value="1"/>
</dbReference>
<dbReference type="SUPFAM" id="SSF52540">
    <property type="entry name" value="P-loop containing nucleoside triphosphate hydrolases"/>
    <property type="match status" value="1"/>
</dbReference>
<dbReference type="PROSITE" id="PS00411">
    <property type="entry name" value="KINESIN_MOTOR_1"/>
    <property type="match status" value="1"/>
</dbReference>
<dbReference type="PROSITE" id="PS50067">
    <property type="entry name" value="KINESIN_MOTOR_2"/>
    <property type="match status" value="1"/>
</dbReference>
<evidence type="ECO:0000250" key="1">
    <source>
        <dbReference type="UniProtKB" id="Q2PQA9"/>
    </source>
</evidence>
<evidence type="ECO:0000250" key="2">
    <source>
        <dbReference type="UniProtKB" id="Q61768"/>
    </source>
</evidence>
<evidence type="ECO:0000255" key="3">
    <source>
        <dbReference type="PROSITE-ProRule" id="PRU00283"/>
    </source>
</evidence>
<evidence type="ECO:0000256" key="4">
    <source>
        <dbReference type="SAM" id="MobiDB-lite"/>
    </source>
</evidence>
<evidence type="ECO:0000269" key="5">
    <source>
    </source>
</evidence>
<evidence type="ECO:0000269" key="6">
    <source>
    </source>
</evidence>
<evidence type="ECO:0000269" key="7">
    <source>
    </source>
</evidence>
<evidence type="ECO:0000269" key="8">
    <source>
    </source>
</evidence>
<evidence type="ECO:0000269" key="9">
    <source>
    </source>
</evidence>
<evidence type="ECO:0000269" key="10">
    <source>
    </source>
</evidence>
<evidence type="ECO:0000269" key="11">
    <source>
    </source>
</evidence>
<evidence type="ECO:0000269" key="12">
    <source>
    </source>
</evidence>
<evidence type="ECO:0000269" key="13">
    <source>
    </source>
</evidence>
<evidence type="ECO:0000269" key="14">
    <source>
    </source>
</evidence>
<evidence type="ECO:0000269" key="15">
    <source>
    </source>
</evidence>
<evidence type="ECO:0000305" key="16"/>
<evidence type="ECO:0000305" key="17">
    <source>
    </source>
</evidence>
<evidence type="ECO:0000305" key="18">
    <source>
    </source>
</evidence>
<evidence type="ECO:0000312" key="19">
    <source>
        <dbReference type="HGNC" id="HGNC:6324"/>
    </source>
</evidence>
<evidence type="ECO:0007744" key="20">
    <source>
    </source>
</evidence>
<evidence type="ECO:0007744" key="21">
    <source>
    </source>
</evidence>
<evidence type="ECO:0007744" key="22">
    <source>
    </source>
</evidence>
<evidence type="ECO:0007744" key="23">
    <source>
    </source>
</evidence>
<evidence type="ECO:0007744" key="24">
    <source>
    </source>
</evidence>
<evidence type="ECO:0007744" key="25">
    <source>
    </source>
</evidence>
<evidence type="ECO:0007829" key="26">
    <source>
        <dbReference type="PDB" id="1BG2"/>
    </source>
</evidence>
<evidence type="ECO:0007829" key="27">
    <source>
        <dbReference type="PDB" id="1MKJ"/>
    </source>
</evidence>
<evidence type="ECO:0007829" key="28">
    <source>
        <dbReference type="PDB" id="7RIK"/>
    </source>
</evidence>
<evidence type="ECO:0007829" key="29">
    <source>
        <dbReference type="PDB" id="9GNQ"/>
    </source>
</evidence>
<gene>
    <name evidence="19" type="primary">KIF5B</name>
    <name type="synonym">KNS</name>
    <name type="synonym">KNS1</name>
</gene>
<reference key="1">
    <citation type="journal article" date="1992" name="J. Cell Biol.">
        <title>Cloning and expression of a human kinesin heavy chain gene: interaction of the COOH-terminal domain with cytoplasmic microtubules in transfected CV-1 cells.</title>
        <authorList>
            <person name="Navone F."/>
            <person name="Niclas J."/>
            <person name="Hom-Booher N."/>
            <person name="Sparks L."/>
            <person name="Bernstein H.D."/>
            <person name="McCaffrey G."/>
            <person name="Vale R.D."/>
        </authorList>
    </citation>
    <scope>NUCLEOTIDE SEQUENCE [MRNA]</scope>
    <source>
        <tissue>Placenta</tissue>
    </source>
</reference>
<reference key="2">
    <citation type="journal article" date="2004" name="Nature">
        <title>The DNA sequence and comparative analysis of human chromosome 10.</title>
        <authorList>
            <person name="Deloukas P."/>
            <person name="Earthrowl M.E."/>
            <person name="Grafham D.V."/>
            <person name="Rubenfield M."/>
            <person name="French L."/>
            <person name="Steward C.A."/>
            <person name="Sims S.K."/>
            <person name="Jones M.C."/>
            <person name="Searle S."/>
            <person name="Scott C."/>
            <person name="Howe K."/>
            <person name="Hunt S.E."/>
            <person name="Andrews T.D."/>
            <person name="Gilbert J.G.R."/>
            <person name="Swarbreck D."/>
            <person name="Ashurst J.L."/>
            <person name="Taylor A."/>
            <person name="Battles J."/>
            <person name="Bird C.P."/>
            <person name="Ainscough R."/>
            <person name="Almeida J.P."/>
            <person name="Ashwell R.I.S."/>
            <person name="Ambrose K.D."/>
            <person name="Babbage A.K."/>
            <person name="Bagguley C.L."/>
            <person name="Bailey J."/>
            <person name="Banerjee R."/>
            <person name="Bates K."/>
            <person name="Beasley H."/>
            <person name="Bray-Allen S."/>
            <person name="Brown A.J."/>
            <person name="Brown J.Y."/>
            <person name="Burford D.C."/>
            <person name="Burrill W."/>
            <person name="Burton J."/>
            <person name="Cahill P."/>
            <person name="Camire D."/>
            <person name="Carter N.P."/>
            <person name="Chapman J.C."/>
            <person name="Clark S.Y."/>
            <person name="Clarke G."/>
            <person name="Clee C.M."/>
            <person name="Clegg S."/>
            <person name="Corby N."/>
            <person name="Coulson A."/>
            <person name="Dhami P."/>
            <person name="Dutta I."/>
            <person name="Dunn M."/>
            <person name="Faulkner L."/>
            <person name="Frankish A."/>
            <person name="Frankland J.A."/>
            <person name="Garner P."/>
            <person name="Garnett J."/>
            <person name="Gribble S."/>
            <person name="Griffiths C."/>
            <person name="Grocock R."/>
            <person name="Gustafson E."/>
            <person name="Hammond S."/>
            <person name="Harley J.L."/>
            <person name="Hart E."/>
            <person name="Heath P.D."/>
            <person name="Ho T.P."/>
            <person name="Hopkins B."/>
            <person name="Horne J."/>
            <person name="Howden P.J."/>
            <person name="Huckle E."/>
            <person name="Hynds C."/>
            <person name="Johnson C."/>
            <person name="Johnson D."/>
            <person name="Kana A."/>
            <person name="Kay M."/>
            <person name="Kimberley A.M."/>
            <person name="Kershaw J.K."/>
            <person name="Kokkinaki M."/>
            <person name="Laird G.K."/>
            <person name="Lawlor S."/>
            <person name="Lee H.M."/>
            <person name="Leongamornlert D.A."/>
            <person name="Laird G."/>
            <person name="Lloyd C."/>
            <person name="Lloyd D.M."/>
            <person name="Loveland J."/>
            <person name="Lovell J."/>
            <person name="McLaren S."/>
            <person name="McLay K.E."/>
            <person name="McMurray A."/>
            <person name="Mashreghi-Mohammadi M."/>
            <person name="Matthews L."/>
            <person name="Milne S."/>
            <person name="Nickerson T."/>
            <person name="Nguyen M."/>
            <person name="Overton-Larty E."/>
            <person name="Palmer S.A."/>
            <person name="Pearce A.V."/>
            <person name="Peck A.I."/>
            <person name="Pelan S."/>
            <person name="Phillimore B."/>
            <person name="Porter K."/>
            <person name="Rice C.M."/>
            <person name="Rogosin A."/>
            <person name="Ross M.T."/>
            <person name="Sarafidou T."/>
            <person name="Sehra H.K."/>
            <person name="Shownkeen R."/>
            <person name="Skuce C.D."/>
            <person name="Smith M."/>
            <person name="Standring L."/>
            <person name="Sycamore N."/>
            <person name="Tester J."/>
            <person name="Thorpe A."/>
            <person name="Torcasso W."/>
            <person name="Tracey A."/>
            <person name="Tromans A."/>
            <person name="Tsolas J."/>
            <person name="Wall M."/>
            <person name="Walsh J."/>
            <person name="Wang H."/>
            <person name="Weinstock K."/>
            <person name="West A.P."/>
            <person name="Willey D.L."/>
            <person name="Whitehead S.L."/>
            <person name="Wilming L."/>
            <person name="Wray P.W."/>
            <person name="Young L."/>
            <person name="Chen Y."/>
            <person name="Lovering R.C."/>
            <person name="Moschonas N.K."/>
            <person name="Siebert R."/>
            <person name="Fechtel K."/>
            <person name="Bentley D."/>
            <person name="Durbin R.M."/>
            <person name="Hubbard T."/>
            <person name="Doucette-Stamm L."/>
            <person name="Beck S."/>
            <person name="Smith D.R."/>
            <person name="Rogers J."/>
        </authorList>
    </citation>
    <scope>NUCLEOTIDE SEQUENCE [LARGE SCALE GENOMIC DNA]</scope>
</reference>
<reference key="3">
    <citation type="journal article" date="2004" name="Genome Res.">
        <title>The status, quality, and expansion of the NIH full-length cDNA project: the Mammalian Gene Collection (MGC).</title>
        <authorList>
            <consortium name="The MGC Project Team"/>
        </authorList>
    </citation>
    <scope>NUCLEOTIDE SEQUENCE [LARGE SCALE MRNA]</scope>
</reference>
<reference key="4">
    <citation type="journal article" date="2004" name="Nat. Cell Biol.">
        <title>Syntabulin is a microtubule-associated protein implicated in syntaxin transport in neurons.</title>
        <authorList>
            <person name="Su Q."/>
            <person name="Cai Q."/>
            <person name="Gerwin C."/>
            <person name="Smith C.L."/>
            <person name="Sheng Z.-H."/>
        </authorList>
    </citation>
    <scope>INTERACTION WITH SYBU</scope>
</reference>
<reference key="5">
    <citation type="journal article" date="2005" name="Science">
        <title>The intracellular fate of Salmonella depends on the recruitment of kinesin.</title>
        <authorList>
            <person name="Boucrot E."/>
            <person name="Henry T."/>
            <person name="Borg J.-P."/>
            <person name="Gorvel J.-P."/>
            <person name="Meresse S."/>
        </authorList>
    </citation>
    <scope>INTERACTION WITH PLEKHM2</scope>
</reference>
<reference key="6">
    <citation type="journal article" date="2006" name="Cell">
        <title>Global, in vivo, and site-specific phosphorylation dynamics in signaling networks.</title>
        <authorList>
            <person name="Olsen J.V."/>
            <person name="Blagoev B."/>
            <person name="Gnad F."/>
            <person name="Macek B."/>
            <person name="Kumar C."/>
            <person name="Mortensen P."/>
            <person name="Mann M."/>
        </authorList>
    </citation>
    <scope>IDENTIFICATION BY MASS SPECTROMETRY [LARGE SCALE ANALYSIS]</scope>
    <source>
        <tissue>Cervix carcinoma</tissue>
    </source>
</reference>
<reference key="7">
    <citation type="journal article" date="2007" name="Mol. Cell. Neurosci.">
        <title>Marlin-1 and conventional kinesin link GABAB receptors to the cytoskeleton and regulate receptor transport.</title>
        <authorList>
            <person name="Vidal R.L."/>
            <person name="Ramirez O.A."/>
            <person name="Sandoval L."/>
            <person name="Koenig-Robert R."/>
            <person name="Haertel S."/>
            <person name="Couve A."/>
        </authorList>
    </citation>
    <scope>INTERACTION WITH JAKMIP1</scope>
</reference>
<reference key="8">
    <citation type="journal article" date="2009" name="Anal. Chem.">
        <title>Lys-N and trypsin cover complementary parts of the phosphoproteome in a refined SCX-based approach.</title>
        <authorList>
            <person name="Gauci S."/>
            <person name="Helbig A.O."/>
            <person name="Slijper M."/>
            <person name="Krijgsveld J."/>
            <person name="Heck A.J."/>
            <person name="Mohammed S."/>
        </authorList>
    </citation>
    <scope>ACETYLATION [LARGE SCALE ANALYSIS] AT ALA-2</scope>
    <scope>CLEAVAGE OF INITIATOR METHIONINE [LARGE SCALE ANALYSIS]</scope>
    <scope>IDENTIFICATION BY MASS SPECTROMETRY [LARGE SCALE ANALYSIS]</scope>
</reference>
<reference key="9">
    <citation type="journal article" date="2010" name="J. Biol. Chem.">
        <title>A protein interaction network for Ecm29 links the 26 S proteasome to molecular motors and endosomal components.</title>
        <authorList>
            <person name="Gorbea C."/>
            <person name="Pratt G."/>
            <person name="Ustrell V."/>
            <person name="Bell R."/>
            <person name="Sahasrabudhe S."/>
            <person name="Hughes R.E."/>
            <person name="Rechsteiner M."/>
        </authorList>
    </citation>
    <scope>INTERACTION WITH ECPAS</scope>
</reference>
<reference key="10">
    <citation type="journal article" date="2010" name="PLoS Biol.">
        <title>Bicaudal D2, dynein, and kinesin-1 associate with nuclear pore complexes and regulate centrosome and nuclear positioning during mitotic entry.</title>
        <authorList>
            <person name="Splinter D."/>
            <person name="Tanenbaum M.E."/>
            <person name="Lindqvist A."/>
            <person name="Jaarsma D."/>
            <person name="Flotho A."/>
            <person name="Yu K.L."/>
            <person name="Grigoriev I."/>
            <person name="Engelsma D."/>
            <person name="Haasdijk E.D."/>
            <person name="Keijzer N."/>
            <person name="Demmers J."/>
            <person name="Fornerod M."/>
            <person name="Melchior F."/>
            <person name="Hoogenraad C.C."/>
            <person name="Medema R.H."/>
            <person name="Akhmanova A."/>
        </authorList>
    </citation>
    <scope>FUNCTION</scope>
</reference>
<reference key="11">
    <citation type="journal article" date="2010" name="Sci. Signal.">
        <title>Quantitative phosphoproteomics reveals widespread full phosphorylation site occupancy during mitosis.</title>
        <authorList>
            <person name="Olsen J.V."/>
            <person name="Vermeulen M."/>
            <person name="Santamaria A."/>
            <person name="Kumar C."/>
            <person name="Miller M.L."/>
            <person name="Jensen L.J."/>
            <person name="Gnad F."/>
            <person name="Cox J."/>
            <person name="Jensen T.S."/>
            <person name="Nigg E.A."/>
            <person name="Brunak S."/>
            <person name="Mann M."/>
        </authorList>
    </citation>
    <scope>PHOSPHORYLATION [LARGE SCALE ANALYSIS] AT SER-933</scope>
    <scope>IDENTIFICATION BY MASS SPECTROMETRY [LARGE SCALE ANALYSIS]</scope>
    <source>
        <tissue>Cervix carcinoma</tissue>
    </source>
</reference>
<reference key="12">
    <citation type="journal article" date="2011" name="BMC Syst. Biol.">
        <title>Initial characterization of the human central proteome.</title>
        <authorList>
            <person name="Burkard T.R."/>
            <person name="Planyavsky M."/>
            <person name="Kaupe I."/>
            <person name="Breitwieser F.P."/>
            <person name="Buerckstuemmer T."/>
            <person name="Bennett K.L."/>
            <person name="Superti-Furga G."/>
            <person name="Colinge J."/>
        </authorList>
    </citation>
    <scope>IDENTIFICATION BY MASS SPECTROMETRY [LARGE SCALE ANALYSIS]</scope>
</reference>
<reference key="13">
    <citation type="journal article" date="2011" name="Dev. Cell">
        <title>Arl8 and SKIP act together to link lysosomes to kinesin-1.</title>
        <authorList>
            <person name="Rosa-Ferreira C."/>
            <person name="Munro S."/>
        </authorList>
    </citation>
    <scope>FUNCTION</scope>
    <scope>SUBCELLULAR LOCATION</scope>
</reference>
<reference key="14">
    <citation type="journal article" date="2012" name="Mol. Cell. Proteomics">
        <title>Comparative large-scale characterisation of plant vs. mammal proteins reveals similar and idiosyncratic N-alpha acetylation features.</title>
        <authorList>
            <person name="Bienvenut W.V."/>
            <person name="Sumpton D."/>
            <person name="Martinez A."/>
            <person name="Lilla S."/>
            <person name="Espagne C."/>
            <person name="Meinnel T."/>
            <person name="Giglione C."/>
        </authorList>
    </citation>
    <scope>ACETYLATION [LARGE SCALE ANALYSIS] AT ALA-2</scope>
    <scope>CLEAVAGE OF INITIATOR METHIONINE [LARGE SCALE ANALYSIS]</scope>
    <scope>IDENTIFICATION BY MASS SPECTROMETRY [LARGE SCALE ANALYSIS]</scope>
</reference>
<reference key="15">
    <citation type="journal article" date="2012" name="Phys. Biol.">
        <title>Quantitative measurements and modeling of cargo-motor interactions during fast transport in the living axon.</title>
        <authorList>
            <person name="Seamster P.E."/>
            <person name="Loewenberg M."/>
            <person name="Pascal J."/>
            <person name="Chauviere A."/>
            <person name="Gonzales A."/>
            <person name="Cristini V."/>
            <person name="Bearer E.L."/>
        </authorList>
    </citation>
    <scope>INTERACTION WITH APP</scope>
</reference>
<reference key="16">
    <citation type="journal article" date="2012" name="Proc. Natl. Acad. Sci. U.S.A.">
        <title>N-terminal acetylome analyses and functional insights of the N-terminal acetyltransferase NatB.</title>
        <authorList>
            <person name="Van Damme P."/>
            <person name="Lasa M."/>
            <person name="Polevoda B."/>
            <person name="Gazquez C."/>
            <person name="Elosegui-Artola A."/>
            <person name="Kim D.S."/>
            <person name="De Juan-Pardo E."/>
            <person name="Demeyer K."/>
            <person name="Hole K."/>
            <person name="Larrea E."/>
            <person name="Timmerman E."/>
            <person name="Prieto J."/>
            <person name="Arnesen T."/>
            <person name="Sherman F."/>
            <person name="Gevaert K."/>
            <person name="Aldabe R."/>
        </authorList>
    </citation>
    <scope>ACETYLATION [LARGE SCALE ANALYSIS] AT ALA-2</scope>
    <scope>CLEAVAGE OF INITIATOR METHIONINE [LARGE SCALE ANALYSIS]</scope>
    <scope>IDENTIFICATION BY MASS SPECTROMETRY [LARGE SCALE ANALYSIS]</scope>
</reference>
<reference key="17">
    <citation type="journal article" date="2013" name="Mol. Biol. Cell">
        <title>Arf-like GTPase Arl8b regulates lytic granule polarization and natural killer cell-mediated cytotoxicity.</title>
        <authorList>
            <person name="Tuli A."/>
            <person name="Thiery J."/>
            <person name="James A.M."/>
            <person name="Michelet X."/>
            <person name="Sharma M."/>
            <person name="Garg S."/>
            <person name="Sanborn K.B."/>
            <person name="Orange J.S."/>
            <person name="Lieberman J."/>
            <person name="Brenner M.B."/>
        </authorList>
    </citation>
    <scope>FUNCTION</scope>
    <scope>SUBCELLULAR LOCATION</scope>
</reference>
<reference key="18">
    <citation type="journal article" date="2014" name="Cell">
        <title>Glucose regulates mitochondrial motility via Milton modification by O-GlcNAc transferase.</title>
        <authorList>
            <person name="Pekkurnaz G."/>
            <person name="Trinidad J.C."/>
            <person name="Wang X."/>
            <person name="Kong D."/>
            <person name="Schwarz T.L."/>
        </authorList>
    </citation>
    <scope>INTERACTION WITH OGT; RHOT1; RHOT2 AND TRAK1</scope>
</reference>
<reference key="19">
    <citation type="journal article" date="2014" name="J. Proteomics">
        <title>An enzyme assisted RP-RPLC approach for in-depth analysis of human liver phosphoproteome.</title>
        <authorList>
            <person name="Bian Y."/>
            <person name="Song C."/>
            <person name="Cheng K."/>
            <person name="Dong M."/>
            <person name="Wang F."/>
            <person name="Huang J."/>
            <person name="Sun D."/>
            <person name="Wang L."/>
            <person name="Ye M."/>
            <person name="Zou H."/>
        </authorList>
    </citation>
    <scope>IDENTIFICATION BY MASS SPECTROMETRY [LARGE SCALE ANALYSIS]</scope>
    <source>
        <tissue>Liver</tissue>
    </source>
</reference>
<reference key="20">
    <citation type="journal article" date="2014" name="Mol. Cell. Proteomics">
        <title>Immunoaffinity enrichment and mass spectrometry analysis of protein methylation.</title>
        <authorList>
            <person name="Guo A."/>
            <person name="Gu H."/>
            <person name="Zhou J."/>
            <person name="Mulhern D."/>
            <person name="Wang Y."/>
            <person name="Lee K.A."/>
            <person name="Yang V."/>
            <person name="Aguiar M."/>
            <person name="Kornhauser J."/>
            <person name="Jia X."/>
            <person name="Ren J."/>
            <person name="Beausoleil S.A."/>
            <person name="Silva J.C."/>
            <person name="Vemulapalli V."/>
            <person name="Bedford M.T."/>
            <person name="Comb M.J."/>
        </authorList>
    </citation>
    <scope>METHYLATION [LARGE SCALE ANALYSIS] AT ARG-956</scope>
    <scope>IDENTIFICATION BY MASS SPECTROMETRY [LARGE SCALE ANALYSIS]</scope>
    <source>
        <tissue>Colon carcinoma</tissue>
    </source>
</reference>
<reference key="21">
    <citation type="journal article" date="2017" name="Nat. Struct. Mol. Biol.">
        <title>Site-specific mapping of the human SUMO proteome reveals co-modification with phosphorylation.</title>
        <authorList>
            <person name="Hendriks I.A."/>
            <person name="Lyon D."/>
            <person name="Young C."/>
            <person name="Jensen L.J."/>
            <person name="Vertegaal A.C."/>
            <person name="Nielsen M.L."/>
        </authorList>
    </citation>
    <scope>SUMOYLATION [LARGE SCALE ANALYSIS] AT LYS-213</scope>
    <scope>IDENTIFICATION BY MASS SPECTROMETRY [LARGE SCALE ANALYSIS]</scope>
</reference>
<reference key="22">
    <citation type="journal article" date="1996" name="Nature">
        <title>Crystal structure of the kinesin motor domain reveals a structural similarity to myosin.</title>
        <authorList>
            <person name="Kull F.J."/>
            <person name="Sablin E.P."/>
            <person name="Lau R."/>
            <person name="Fletterick R.J."/>
            <person name="Vale R.D."/>
        </authorList>
    </citation>
    <scope>X-RAY CRYSTALLOGRAPHY (1.8 ANGSTROMS) OF 1-349 IN COMPLEX WITH ADP</scope>
</reference>
<reference key="23">
    <citation type="journal article" date="2002" name="Nat. Struct. Biol.">
        <title>Two conformations in the human kinesin power stroke defined by X-ray crystallography and EPR spectroscopy.</title>
        <authorList>
            <person name="Sindelar C.V."/>
            <person name="Budny M.J."/>
            <person name="Rice S."/>
            <person name="Naber N."/>
            <person name="Fletterick R."/>
            <person name="Cooke R."/>
        </authorList>
    </citation>
    <scope>X-RAY CRYSTALLOGRAPHY (2.7 ANGSTROMS) OF 1-349 IN COMPLEX WITH ADP</scope>
</reference>
<reference key="24">
    <citation type="journal article" date="2007" name="J. Cell Biol.">
        <title>The beginning of kinesin's force-generating cycle visualized at 9-A resolution.</title>
        <authorList>
            <person name="Sindelar C.V."/>
            <person name="Downing K.H."/>
        </authorList>
    </citation>
    <scope>STRUCTURE BY ELECTRON MICROSCOPY (9.0 ANGSTROMS) OF 1-325</scope>
</reference>
<keyword id="KW-0002">3D-structure</keyword>
<keyword id="KW-0007">Acetylation</keyword>
<keyword id="KW-0067">ATP-binding</keyword>
<keyword id="KW-0175">Coiled coil</keyword>
<keyword id="KW-0963">Cytoplasm</keyword>
<keyword id="KW-0206">Cytoskeleton</keyword>
<keyword id="KW-1017">Isopeptide bond</keyword>
<keyword id="KW-0458">Lysosome</keyword>
<keyword id="KW-0472">Membrane</keyword>
<keyword id="KW-0488">Methylation</keyword>
<keyword id="KW-0493">Microtubule</keyword>
<keyword id="KW-0505">Motor protein</keyword>
<keyword id="KW-0547">Nucleotide-binding</keyword>
<keyword id="KW-0597">Phosphoprotein</keyword>
<keyword id="KW-1267">Proteomics identification</keyword>
<keyword id="KW-1185">Reference proteome</keyword>
<keyword id="KW-0832">Ubl conjugation</keyword>
<sequence length="963" mass="109685">MADLAECNIKVMCRFRPLNESEVNRGDKYIAKFQGEDTVVIASKPYAFDRVFQSSTSQEQVYNDCAKKIVKDVLEGYNGTIFAYGQTSSGKTHTMEGKLHDPEGMGIIPRIVQDIFNYIYSMDENLEFHIKVSYFEIYLDKIRDLLDVSKTNLSVHEDKNRVPYVKGCTERFVCSPDEVMDTIDEGKSNRHVAVTNMNEHSSRSHSIFLINVKQENTQTEQKLSGKLYLVDLAGSEKVSKTGAEGAVLDEAKNINKSLSALGNVISALAEGSTYVPYRDSKMTRILQDSLGGNCRTTIVICCSPSSYNESETKSTLLFGQRAKTIKNTVCVNVELTAEQWKKKYEKEKEKNKILRNTIQWLENELNRWRNGETVPIDEQFDKEKANLEAFTVDKDITLTNDKPATAIGVIGNFTDAERRKCEEEIAKLYKQLDDKDEEINQQSQLVEKLKTQMLDQEELLASTRRDQDNMQAELNRLQAENDASKEEVKEVLQALEELAVNYDQKSQEVEDKTKEYELLSDELNQKSATLASIDAELQKLKEMTNHQKKRAAEMMASLLKDLAEIGIAVGNNDVKQPEGTGMIDEEFTVARLYISKMKSEVKTMVKRCKQLESTQTESNKKMEENEKELAACQLRISQHEAKIKSLTEYLQNVEQKKRQLEESVDALSEELVQLRAQEKVHEMEKEHLNKVQTANEVKQAVEQQIQSHRETHQKQISSLRDEVEAKAKLITDLQDQNQKMMLEQERLRVEHEKLKATDQEKSRKLHELTVMQDRREQARQDLKGLEETVAKELQTLHNLRKLFVQDLATRVKKSAEIDSDDTGGSAAQKQKISFLENNLEQLTKVHKQLVRDNADLRCELPKLEKRLRATAERVKALESALKEAKENASRDRKRYQQEVDRIKEAVRSKNMARRGHSAQIAKPIRPGQHPAASPTHPSAIRGGGAFVQNSQPVAVRGGGGKQV</sequence>
<proteinExistence type="evidence at protein level"/>
<organism>
    <name type="scientific">Homo sapiens</name>
    <name type="common">Human</name>
    <dbReference type="NCBI Taxonomy" id="9606"/>
    <lineage>
        <taxon>Eukaryota</taxon>
        <taxon>Metazoa</taxon>
        <taxon>Chordata</taxon>
        <taxon>Craniata</taxon>
        <taxon>Vertebrata</taxon>
        <taxon>Euteleostomi</taxon>
        <taxon>Mammalia</taxon>
        <taxon>Eutheria</taxon>
        <taxon>Euarchontoglires</taxon>
        <taxon>Primates</taxon>
        <taxon>Haplorrhini</taxon>
        <taxon>Catarrhini</taxon>
        <taxon>Hominidae</taxon>
        <taxon>Homo</taxon>
    </lineage>
</organism>
<feature type="initiator methionine" description="Removed" evidence="20 22 23">
    <location>
        <position position="1"/>
    </location>
</feature>
<feature type="chain" id="PRO_0000125351" description="Kinesin-1 heavy chain">
    <location>
        <begin position="2"/>
        <end position="963"/>
    </location>
</feature>
<feature type="domain" description="Kinesin motor" evidence="3">
    <location>
        <begin position="8"/>
        <end position="325"/>
    </location>
</feature>
<feature type="region of interest" description="Disordered" evidence="4">
    <location>
        <begin position="908"/>
        <end position="963"/>
    </location>
</feature>
<feature type="region of interest" description="Globular">
    <location>
        <begin position="915"/>
        <end position="963"/>
    </location>
</feature>
<feature type="coiled-coil region">
    <location>
        <begin position="329"/>
        <end position="914"/>
    </location>
</feature>
<feature type="binding site">
    <location>
        <begin position="85"/>
        <end position="92"/>
    </location>
    <ligand>
        <name>ATP</name>
        <dbReference type="ChEBI" id="CHEBI:30616"/>
    </ligand>
</feature>
<feature type="modified residue" description="N-acetylalanine" evidence="20 22 23">
    <location>
        <position position="2"/>
    </location>
</feature>
<feature type="modified residue" description="Phosphoserine" evidence="21">
    <location>
        <position position="933"/>
    </location>
</feature>
<feature type="modified residue" description="Omega-N-methylarginine" evidence="24">
    <location>
        <position position="956"/>
    </location>
</feature>
<feature type="cross-link" description="Glycyl lysine isopeptide (Lys-Gly) (interchain with G-Cter in SUMO2)" evidence="25">
    <location>
        <position position="213"/>
    </location>
</feature>
<feature type="strand" evidence="26">
    <location>
        <begin position="8"/>
        <end position="15"/>
    </location>
</feature>
<feature type="helix" evidence="26">
    <location>
        <begin position="20"/>
        <end position="25"/>
    </location>
</feature>
<feature type="strand" evidence="26">
    <location>
        <begin position="32"/>
        <end position="34"/>
    </location>
</feature>
<feature type="turn" evidence="26">
    <location>
        <begin position="35"/>
        <end position="37"/>
    </location>
</feature>
<feature type="strand" evidence="26">
    <location>
        <begin position="38"/>
        <end position="41"/>
    </location>
</feature>
<feature type="strand" evidence="26">
    <location>
        <begin position="44"/>
        <end position="47"/>
    </location>
</feature>
<feature type="strand" evidence="26">
    <location>
        <begin position="49"/>
        <end position="52"/>
    </location>
</feature>
<feature type="helix" evidence="28">
    <location>
        <begin position="54"/>
        <end position="56"/>
    </location>
</feature>
<feature type="helix" evidence="26">
    <location>
        <begin position="58"/>
        <end position="65"/>
    </location>
</feature>
<feature type="helix" evidence="26">
    <location>
        <begin position="67"/>
        <end position="74"/>
    </location>
</feature>
<feature type="strand" evidence="26">
    <location>
        <begin position="79"/>
        <end position="84"/>
    </location>
</feature>
<feature type="turn" evidence="28">
    <location>
        <begin position="87"/>
        <end position="89"/>
    </location>
</feature>
<feature type="helix" evidence="26">
    <location>
        <begin position="91"/>
        <end position="95"/>
    </location>
</feature>
<feature type="turn" evidence="26">
    <location>
        <begin position="102"/>
        <end position="104"/>
    </location>
</feature>
<feature type="helix" evidence="26">
    <location>
        <begin position="107"/>
        <end position="122"/>
    </location>
</feature>
<feature type="strand" evidence="26">
    <location>
        <begin position="124"/>
        <end position="138"/>
    </location>
</feature>
<feature type="strand" evidence="26">
    <location>
        <begin position="141"/>
        <end position="146"/>
    </location>
</feature>
<feature type="strand" evidence="26">
    <location>
        <begin position="155"/>
        <end position="157"/>
    </location>
</feature>
<feature type="strand" evidence="26">
    <location>
        <begin position="163"/>
        <end position="165"/>
    </location>
</feature>
<feature type="strand" evidence="26">
    <location>
        <begin position="171"/>
        <end position="173"/>
    </location>
</feature>
<feature type="helix" evidence="26">
    <location>
        <begin position="176"/>
        <end position="189"/>
    </location>
</feature>
<feature type="turn" evidence="26">
    <location>
        <begin position="190"/>
        <end position="193"/>
    </location>
</feature>
<feature type="helix" evidence="26">
    <location>
        <begin position="197"/>
        <end position="203"/>
    </location>
</feature>
<feature type="strand" evidence="26">
    <location>
        <begin position="204"/>
        <end position="216"/>
    </location>
</feature>
<feature type="turn" evidence="26">
    <location>
        <begin position="217"/>
        <end position="219"/>
    </location>
</feature>
<feature type="strand" evidence="26">
    <location>
        <begin position="222"/>
        <end position="231"/>
    </location>
</feature>
<feature type="helix" evidence="29">
    <location>
        <begin position="238"/>
        <end position="240"/>
    </location>
</feature>
<feature type="strand" evidence="26">
    <location>
        <begin position="242"/>
        <end position="244"/>
    </location>
</feature>
<feature type="helix" evidence="26">
    <location>
        <begin position="256"/>
        <end position="269"/>
    </location>
</feature>
<feature type="helix" evidence="26">
    <location>
        <begin position="277"/>
        <end position="279"/>
    </location>
</feature>
<feature type="helix" evidence="26">
    <location>
        <begin position="281"/>
        <end position="285"/>
    </location>
</feature>
<feature type="helix" evidence="26">
    <location>
        <begin position="286"/>
        <end position="288"/>
    </location>
</feature>
<feature type="strand" evidence="26">
    <location>
        <begin position="290"/>
        <end position="293"/>
    </location>
</feature>
<feature type="strand" evidence="26">
    <location>
        <begin position="295"/>
        <end position="302"/>
    </location>
</feature>
<feature type="helix" evidence="26">
    <location>
        <begin position="306"/>
        <end position="308"/>
    </location>
</feature>
<feature type="helix" evidence="26">
    <location>
        <begin position="309"/>
        <end position="320"/>
    </location>
</feature>
<feature type="turn" evidence="28">
    <location>
        <begin position="321"/>
        <end position="324"/>
    </location>
</feature>
<feature type="strand" evidence="27">
    <location>
        <begin position="326"/>
        <end position="329"/>
    </location>
</feature>
<feature type="helix" evidence="27">
    <location>
        <begin position="337"/>
        <end position="348"/>
    </location>
</feature>
<name>KINH_HUMAN</name>